<feature type="chain" id="PRO_0000057169" description="Seminal ribonuclease">
    <location>
        <begin position="1" status="less than"/>
        <end position="103" status="greater than"/>
    </location>
</feature>
<feature type="binding site" evidence="1">
    <location>
        <begin position="27"/>
        <end position="31"/>
    </location>
    <ligand>
        <name>substrate</name>
    </ligand>
</feature>
<feature type="binding site" evidence="1">
    <location>
        <position position="52"/>
    </location>
    <ligand>
        <name>substrate</name>
    </ligand>
</feature>
<feature type="binding site" evidence="1">
    <location>
        <position position="71"/>
    </location>
    <ligand>
        <name>substrate</name>
    </ligand>
</feature>
<feature type="disulfide bond" evidence="1">
    <location>
        <begin position="12"/>
        <end position="70"/>
    </location>
</feature>
<feature type="disulfide bond" description="Interchain" evidence="1">
    <location>
        <position position="18"/>
    </location>
</feature>
<feature type="disulfide bond" evidence="1">
    <location>
        <begin position="26"/>
        <end position="81"/>
    </location>
</feature>
<feature type="disulfide bond" evidence="1">
    <location>
        <begin position="44"/>
        <end position="96"/>
    </location>
</feature>
<feature type="disulfide bond" evidence="1">
    <location>
        <begin position="51"/>
        <end position="58"/>
    </location>
</feature>
<feature type="non-terminal residue">
    <location>
        <position position="1"/>
    </location>
</feature>
<feature type="non-terminal residue">
    <location>
        <position position="103"/>
    </location>
</feature>
<comment type="function">
    <text>This enzyme hydrolyzes both single- and double-stranded RNA.</text>
</comment>
<comment type="catalytic activity">
    <reaction>
        <text>an [RNA] containing cytidine + H2O = an [RNA]-3'-cytidine-3'-phosphate + a 5'-hydroxy-ribonucleotide-3'-[RNA].</text>
        <dbReference type="EC" id="4.6.1.18"/>
    </reaction>
</comment>
<comment type="catalytic activity">
    <reaction>
        <text>an [RNA] containing uridine + H2O = an [RNA]-3'-uridine-3'-phosphate + a 5'-hydroxy-ribonucleotide-3'-[RNA].</text>
        <dbReference type="EC" id="4.6.1.18"/>
    </reaction>
</comment>
<comment type="subunit">
    <text evidence="1">Homodimer; disulfide-linked.</text>
</comment>
<comment type="subcellular location">
    <subcellularLocation>
        <location>Secreted</location>
    </subcellularLocation>
</comment>
<comment type="similarity">
    <text evidence="2">Belongs to the pancreatic ribonuclease family.</text>
</comment>
<proteinExistence type="inferred from homology"/>
<accession>Q29539</accession>
<sequence length="103" mass="11358">SGSSPSSNSNYCNLMMFCRKMTQGKCKLVNTFVHESLADVKAVCSQKKVACKNGQTNCYQSNSAMRITDCRQTGSSKYPNCTCKTTRAEKHIIVACEGKXFMP</sequence>
<keyword id="KW-1015">Disulfide bond</keyword>
<keyword id="KW-0255">Endonuclease</keyword>
<keyword id="KW-0378">Hydrolase</keyword>
<keyword id="KW-0456">Lyase</keyword>
<keyword id="KW-0540">Nuclease</keyword>
<keyword id="KW-0964">Secreted</keyword>
<gene>
    <name type="primary">SRN</name>
</gene>
<organism>
    <name type="scientific">Cephalophus silvicultor</name>
    <name type="common">Yellow-backed duiker</name>
    <dbReference type="NCBI Taxonomy" id="50347"/>
    <lineage>
        <taxon>Eukaryota</taxon>
        <taxon>Metazoa</taxon>
        <taxon>Chordata</taxon>
        <taxon>Craniata</taxon>
        <taxon>Vertebrata</taxon>
        <taxon>Euteleostomi</taxon>
        <taxon>Mammalia</taxon>
        <taxon>Eutheria</taxon>
        <taxon>Laurasiatheria</taxon>
        <taxon>Artiodactyla</taxon>
        <taxon>Ruminantia</taxon>
        <taxon>Pecora</taxon>
        <taxon>Bovidae</taxon>
        <taxon>Cephalophinae</taxon>
        <taxon>Cephalophus</taxon>
    </lineage>
</organism>
<dbReference type="EC" id="4.6.1.18"/>
<dbReference type="EMBL" id="S81529">
    <property type="protein sequence ID" value="AAB39847.1"/>
    <property type="molecule type" value="Genomic_DNA"/>
</dbReference>
<dbReference type="GO" id="GO:0005576">
    <property type="term" value="C:extracellular region"/>
    <property type="evidence" value="ECO:0007669"/>
    <property type="project" value="UniProtKB-SubCell"/>
</dbReference>
<dbReference type="GO" id="GO:0016829">
    <property type="term" value="F:lyase activity"/>
    <property type="evidence" value="ECO:0007669"/>
    <property type="project" value="UniProtKB-KW"/>
</dbReference>
<dbReference type="GO" id="GO:0003676">
    <property type="term" value="F:nucleic acid binding"/>
    <property type="evidence" value="ECO:0007669"/>
    <property type="project" value="InterPro"/>
</dbReference>
<dbReference type="GO" id="GO:0004522">
    <property type="term" value="F:ribonuclease A activity"/>
    <property type="evidence" value="ECO:0007669"/>
    <property type="project" value="UniProtKB-EC"/>
</dbReference>
<dbReference type="GO" id="GO:0050830">
    <property type="term" value="P:defense response to Gram-positive bacterium"/>
    <property type="evidence" value="ECO:0007669"/>
    <property type="project" value="TreeGrafter"/>
</dbReference>
<dbReference type="CDD" id="cd06265">
    <property type="entry name" value="RNase_A_canonical"/>
    <property type="match status" value="1"/>
</dbReference>
<dbReference type="FunFam" id="3.10.130.10:FF:000001">
    <property type="entry name" value="Ribonuclease pancreatic"/>
    <property type="match status" value="1"/>
</dbReference>
<dbReference type="Gene3D" id="3.10.130.10">
    <property type="entry name" value="Ribonuclease A-like domain"/>
    <property type="match status" value="1"/>
</dbReference>
<dbReference type="InterPro" id="IPR001427">
    <property type="entry name" value="RNaseA"/>
</dbReference>
<dbReference type="InterPro" id="IPR036816">
    <property type="entry name" value="RNaseA-like_dom_sf"/>
</dbReference>
<dbReference type="InterPro" id="IPR023411">
    <property type="entry name" value="RNaseA_AS"/>
</dbReference>
<dbReference type="InterPro" id="IPR023412">
    <property type="entry name" value="RNaseA_domain"/>
</dbReference>
<dbReference type="PANTHER" id="PTHR11437">
    <property type="entry name" value="RIBONUCLEASE"/>
    <property type="match status" value="1"/>
</dbReference>
<dbReference type="PANTHER" id="PTHR11437:SF24">
    <property type="entry name" value="RIBONUCLEASE PANCREATIC"/>
    <property type="match status" value="1"/>
</dbReference>
<dbReference type="Pfam" id="PF00074">
    <property type="entry name" value="RnaseA"/>
    <property type="match status" value="1"/>
</dbReference>
<dbReference type="PRINTS" id="PR00794">
    <property type="entry name" value="RIBONUCLEASE"/>
</dbReference>
<dbReference type="SMART" id="SM00092">
    <property type="entry name" value="RNAse_Pc"/>
    <property type="match status" value="1"/>
</dbReference>
<dbReference type="SUPFAM" id="SSF54076">
    <property type="entry name" value="RNase A-like"/>
    <property type="match status" value="1"/>
</dbReference>
<dbReference type="PROSITE" id="PS00127">
    <property type="entry name" value="RNASE_PANCREATIC"/>
    <property type="match status" value="1"/>
</dbReference>
<evidence type="ECO:0000250" key="1"/>
<evidence type="ECO:0000305" key="2"/>
<name>RNS_CEPSI</name>
<protein>
    <recommendedName>
        <fullName>Seminal ribonuclease</fullName>
        <shortName>Seminal RNase</shortName>
        <ecNumber>4.6.1.18</ecNumber>
    </recommendedName>
</protein>
<reference key="1">
    <citation type="journal article" date="1996" name="FEBS Lett.">
        <title>Pseudogenes in ribonuclease evolution: a source of new biomacromolecular function?</title>
        <authorList>
            <person name="Trabesinger-Ruef N."/>
            <person name="Jermann T."/>
            <person name="Zankel T."/>
            <person name="Durrant B."/>
            <person name="Frank G."/>
            <person name="Benner S.A."/>
        </authorList>
    </citation>
    <scope>NUCLEOTIDE SEQUENCE [GENOMIC DNA]</scope>
</reference>